<sequence length="433" mass="48634">MPDYLGADQRKTKEDEKDDKPIRALDEGDIALLKTYGQSTYSRQIKQVEDDIQQLLKKINELTGIKESDTGLAPPALWDLAADKQTLQSEQPLQVARCTKIINADSEDPKYIINVKQFAKFVVDLSDQVAPTDIEEGMRVGVDRNKYQIHIPLPPKIDPTVTMMQVEEKPDVTYSDVGGCKEQIEKLREVVETPLLHPERFVNLGIEPPKGVLLFGPPGTGKTLCARAVANRTDACFIRVIGSELVQKYVGEGARMVRELFEMARTKKACLIFFDEIDAIGGARFDDGAGGDNEVQRTMLELINQLDGFDPRGNIKVLMATNRPDTLDPALMRPGRLDRKIEFSLPDLEGRTHIFKIHARSMSVERDIRFELLARLCPNSTGAEIRSVCTEAGMFAIRARRKIATEKDFLEAVNKVIKSYAKFSATPRYMTYN</sequence>
<feature type="initiator methionine" description="Removed" evidence="4 14">
    <location>
        <position position="1"/>
    </location>
</feature>
<feature type="chain" id="PRO_0000084709" description="26S proteasome regulatory subunit 7">
    <location>
        <begin position="2"/>
        <end position="433"/>
    </location>
</feature>
<feature type="region of interest" description="Disordered" evidence="2">
    <location>
        <begin position="1"/>
        <end position="22"/>
    </location>
</feature>
<feature type="compositionally biased region" description="Basic and acidic residues" evidence="2">
    <location>
        <begin position="8"/>
        <end position="22"/>
    </location>
</feature>
<feature type="binding site" evidence="1">
    <location>
        <begin position="216"/>
        <end position="223"/>
    </location>
    <ligand>
        <name>ATP</name>
        <dbReference type="ChEBI" id="CHEBI:30616"/>
    </ligand>
</feature>
<feature type="modified residue" description="N6-acetyllysine" evidence="19">
    <location>
        <position position="116"/>
    </location>
</feature>
<feature type="modified residue" description="N6-acetyllysine" evidence="19">
    <location>
        <position position="422"/>
    </location>
</feature>
<feature type="splice variant" id="VSP_056178" description="In isoform 2." evidence="16">
    <location>
        <begin position="1"/>
        <end position="137"/>
    </location>
</feature>
<feature type="sequence conflict" description="In Ref. 2; BAE45763." evidence="18" ref="2">
    <original>D</original>
    <variation>V</variation>
    <location>
        <position position="15"/>
    </location>
</feature>
<feature type="helix" evidence="20">
    <location>
        <begin position="27"/>
        <end position="35"/>
    </location>
</feature>
<feature type="helix" evidence="20">
    <location>
        <begin position="42"/>
        <end position="64"/>
    </location>
</feature>
<feature type="helix" evidence="20">
    <location>
        <begin position="75"/>
        <end position="77"/>
    </location>
</feature>
<feature type="helix" evidence="20">
    <location>
        <begin position="80"/>
        <end position="89"/>
    </location>
</feature>
<feature type="strand" evidence="20">
    <location>
        <begin position="93"/>
        <end position="101"/>
    </location>
</feature>
<feature type="strand" evidence="20">
    <location>
        <begin position="104"/>
        <end position="108"/>
    </location>
</feature>
<feature type="strand" evidence="20">
    <location>
        <begin position="111"/>
        <end position="114"/>
    </location>
</feature>
<feature type="strand" evidence="20">
    <location>
        <begin position="120"/>
        <end position="123"/>
    </location>
</feature>
<feature type="turn" evidence="20">
    <location>
        <begin position="131"/>
        <end position="133"/>
    </location>
</feature>
<feature type="strand" evidence="20">
    <location>
        <begin position="138"/>
        <end position="143"/>
    </location>
</feature>
<feature type="turn" evidence="20">
    <location>
        <begin position="144"/>
        <end position="146"/>
    </location>
</feature>
<feature type="helix" evidence="20">
    <location>
        <begin position="159"/>
        <end position="164"/>
    </location>
</feature>
<feature type="helix" evidence="20">
    <location>
        <begin position="174"/>
        <end position="176"/>
    </location>
</feature>
<feature type="helix" evidence="20">
    <location>
        <begin position="181"/>
        <end position="191"/>
    </location>
</feature>
<feature type="helix" evidence="20">
    <location>
        <begin position="193"/>
        <end position="196"/>
    </location>
</feature>
<feature type="helix" evidence="20">
    <location>
        <begin position="200"/>
        <end position="203"/>
    </location>
</feature>
<feature type="strand" evidence="20">
    <location>
        <begin position="211"/>
        <end position="215"/>
    </location>
</feature>
<feature type="helix" evidence="20">
    <location>
        <begin position="224"/>
        <end position="231"/>
    </location>
</feature>
<feature type="strand" evidence="20">
    <location>
        <begin position="234"/>
        <end position="240"/>
    </location>
</feature>
<feature type="helix" evidence="20">
    <location>
        <begin position="252"/>
        <end position="266"/>
    </location>
</feature>
<feature type="strand" evidence="20">
    <location>
        <begin position="267"/>
        <end position="276"/>
    </location>
</feature>
<feature type="helix" evidence="20">
    <location>
        <begin position="277"/>
        <end position="280"/>
    </location>
</feature>
<feature type="helix" evidence="20">
    <location>
        <begin position="292"/>
        <end position="306"/>
    </location>
</feature>
<feature type="strand" evidence="20">
    <location>
        <begin position="315"/>
        <end position="322"/>
    </location>
</feature>
<feature type="helix" evidence="20">
    <location>
        <begin position="324"/>
        <end position="326"/>
    </location>
</feature>
<feature type="helix" evidence="20">
    <location>
        <begin position="329"/>
        <end position="332"/>
    </location>
</feature>
<feature type="turn" evidence="20">
    <location>
        <begin position="334"/>
        <end position="336"/>
    </location>
</feature>
<feature type="helix" evidence="20">
    <location>
        <begin position="348"/>
        <end position="359"/>
    </location>
</feature>
<feature type="helix" evidence="20">
    <location>
        <begin position="370"/>
        <end position="375"/>
    </location>
</feature>
<feature type="helix" evidence="20">
    <location>
        <begin position="384"/>
        <end position="398"/>
    </location>
</feature>
<feature type="strand" evidence="20">
    <location>
        <begin position="402"/>
        <end position="404"/>
    </location>
</feature>
<feature type="helix" evidence="20">
    <location>
        <begin position="406"/>
        <end position="415"/>
    </location>
</feature>
<feature type="helix" evidence="20">
    <location>
        <begin position="418"/>
        <end position="421"/>
    </location>
</feature>
<feature type="helix" evidence="20">
    <location>
        <begin position="426"/>
        <end position="429"/>
    </location>
</feature>
<name>PRS7_HUMAN</name>
<proteinExistence type="evidence at protein level"/>
<organism>
    <name type="scientific">Homo sapiens</name>
    <name type="common">Human</name>
    <dbReference type="NCBI Taxonomy" id="9606"/>
    <lineage>
        <taxon>Eukaryota</taxon>
        <taxon>Metazoa</taxon>
        <taxon>Chordata</taxon>
        <taxon>Craniata</taxon>
        <taxon>Vertebrata</taxon>
        <taxon>Euteleostomi</taxon>
        <taxon>Mammalia</taxon>
        <taxon>Eutheria</taxon>
        <taxon>Euarchontoglires</taxon>
        <taxon>Primates</taxon>
        <taxon>Haplorrhini</taxon>
        <taxon>Catarrhini</taxon>
        <taxon>Hominidae</taxon>
        <taxon>Homo</taxon>
    </lineage>
</organism>
<gene>
    <name type="primary">PSMC2</name>
    <name evidence="17" type="synonym">MSS1</name>
</gene>
<accession>P35998</accession>
<accession>A4D0Q1</accession>
<accession>B7Z5E2</accession>
<accession>Q3LIA5</accession>
<accession>Q9UDI3</accession>
<comment type="function">
    <text evidence="5 13 15">Component of the 26S proteasome, a multiprotein complex involved in the ATP-dependent degradation of ubiquitinated proteins. This complex plays a key role in the maintenance of protein homeostasis by removing misfolded or damaged proteins, which could impair cellular functions, and by removing proteins whose functions are no longer required. Therefore, the proteasome participates in numerous cellular processes, including cell cycle progression, apoptosis, or DNA damage repair. PSMC2 belongs to the heterohexameric ring of AAA (ATPases associated with diverse cellular activities) proteins that unfolds ubiquitinated target proteins that are concurrently translocated into a proteolytic chamber and degraded into peptides.</text>
</comment>
<comment type="subunit">
    <text evidence="3 7 8 9 11 12 15">Component of the 19S proteasome regulatory particle complex. The 26S proteasome consists of a 20S core particle (CP) and two 19S regulatory subunits (RP) (PubMed:27342858, PubMed:27428775). The regulatory particle is made of a lid composed of 9 subunits, a base containing 6 ATPases including PSMC2 and few additional components (PubMed:27342858, PubMed:27428775). Interacts with NDC80/HEC; this interaction is detected only during M phase (PubMed:10409732, PubMed:9295362). Interacts and SQSTM1 (PubMed:15340068). Interacts with PAAF1 (PubMed:15831487). Directly interacts with TRIM5 (PubMed:22078707).</text>
</comment>
<comment type="subunit">
    <text evidence="6">(Microbial infection) Interacts with HIV-1 Tat.</text>
</comment>
<comment type="interaction">
    <interactant intactId="EBI-359710">
        <id>P35998</id>
    </interactant>
    <interactant intactId="EBI-948266">
        <id>O14901</id>
        <label>KLF11</label>
    </interactant>
    <organismsDiffer>false</organismsDiffer>
    <experiments>3</experiments>
</comment>
<comment type="interaction">
    <interactant intactId="EBI-359710">
        <id>P35998</id>
    </interactant>
    <interactant intactId="EBI-2811583">
        <id>Q9BVL2</id>
        <label>NUP58</label>
    </interactant>
    <organismsDiffer>false</organismsDiffer>
    <experiments>3</experiments>
</comment>
<comment type="interaction">
    <interactant intactId="EBI-359710">
        <id>P35998</id>
    </interactant>
    <interactant intactId="EBI-748974">
        <id>Q96CV9</id>
        <label>OPTN</label>
    </interactant>
    <organismsDiffer>false</organismsDiffer>
    <experiments>3</experiments>
</comment>
<comment type="interaction">
    <interactant intactId="EBI-359710">
        <id>P35998</id>
    </interactant>
    <interactant intactId="EBI-357598">
        <id>P62191</id>
        <label>PSMC1</label>
    </interactant>
    <organismsDiffer>false</organismsDiffer>
    <experiments>9</experiments>
</comment>
<comment type="interaction">
    <interactant intactId="EBI-359710">
        <id>P35998</id>
    </interactant>
    <interactant intactId="EBI-357745">
        <id>P62195</id>
        <label>PSMC5</label>
    </interactant>
    <organismsDiffer>false</organismsDiffer>
    <experiments>14</experiments>
</comment>
<comment type="interaction">
    <interactant intactId="EBI-359710">
        <id>P35998</id>
    </interactant>
    <interactant intactId="EBI-357648">
        <id>Q13200</id>
        <label>PSMD2</label>
    </interactant>
    <organismsDiffer>false</organismsDiffer>
    <experiments>8</experiments>
</comment>
<comment type="interaction">
    <interactant intactId="EBI-359710">
        <id>P35998</id>
    </interactant>
    <interactant intactId="EBI-359318">
        <id>P55036</id>
        <label>PSMD4</label>
    </interactant>
    <organismsDiffer>false</organismsDiffer>
    <experiments>5</experiments>
</comment>
<comment type="interaction">
    <interactant intactId="EBI-359710">
        <id>P35998</id>
    </interactant>
    <interactant intactId="EBI-752143">
        <id>Q16401</id>
        <label>PSMD5</label>
    </interactant>
    <organismsDiffer>false</organismsDiffer>
    <experiments>25</experiments>
</comment>
<comment type="interaction">
    <interactant intactId="EBI-359710">
        <id>P35998</id>
    </interactant>
    <interactant intactId="EBI-954531">
        <id>P54727</id>
        <label>RAD23B</label>
    </interactant>
    <organismsDiffer>false</organismsDiffer>
    <experiments>2</experiments>
</comment>
<comment type="subcellular location">
    <subcellularLocation>
        <location evidence="9">Cytoplasm</location>
    </subcellularLocation>
    <text evidence="9">Colocalizes with TRIM5 in cytoplasmic bodies.</text>
</comment>
<comment type="alternative products">
    <event type="alternative splicing"/>
    <isoform>
        <id>P35998-1</id>
        <name>1</name>
        <sequence type="displayed"/>
    </isoform>
    <isoform>
        <id>P35998-2</id>
        <name>2</name>
        <sequence type="described" ref="VSP_056178"/>
    </isoform>
</comment>
<comment type="induction">
    <text evidence="15">Expression is not cell cycle-dependent and occurs throughout the cell cycle.</text>
</comment>
<comment type="PTM">
    <text evidence="10">Monoubiquitinated by RNF181.</text>
</comment>
<comment type="PTM">
    <text evidence="13">Phosphorylated (PubMed:28539385). Dephosphorylated by UBLCP1 which impairs PSMC2 ATPase activity and disrupts 26S proteasome assembly (PubMed:28539385).</text>
</comment>
<comment type="similarity">
    <text evidence="18">Belongs to the AAA ATPase family.</text>
</comment>
<protein>
    <recommendedName>
        <fullName>26S proteasome regulatory subunit 7</fullName>
    </recommendedName>
    <alternativeName>
        <fullName>26S proteasome AAA-ATPase subunit RPT1</fullName>
    </alternativeName>
    <alternativeName>
        <fullName>Proteasome 26S subunit ATPase 2</fullName>
    </alternativeName>
</protein>
<keyword id="KW-0002">3D-structure</keyword>
<keyword id="KW-0007">Acetylation</keyword>
<keyword id="KW-0025">Alternative splicing</keyword>
<keyword id="KW-0067">ATP-binding</keyword>
<keyword id="KW-0963">Cytoplasm</keyword>
<keyword id="KW-0903">Direct protein sequencing</keyword>
<keyword id="KW-0547">Nucleotide-binding</keyword>
<keyword id="KW-0597">Phosphoprotein</keyword>
<keyword id="KW-0647">Proteasome</keyword>
<keyword id="KW-1267">Proteomics identification</keyword>
<keyword id="KW-1185">Reference proteome</keyword>
<keyword id="KW-0832">Ubl conjugation</keyword>
<dbReference type="EMBL" id="D11094">
    <property type="protein sequence ID" value="BAA01868.1"/>
    <property type="molecule type" value="mRNA"/>
</dbReference>
<dbReference type="EMBL" id="AB075520">
    <property type="protein sequence ID" value="BAE45763.1"/>
    <property type="molecule type" value="mRNA"/>
</dbReference>
<dbReference type="EMBL" id="AK298821">
    <property type="protein sequence ID" value="BAH12878.1"/>
    <property type="molecule type" value="mRNA"/>
</dbReference>
<dbReference type="EMBL" id="AC004668">
    <property type="status" value="NOT_ANNOTATED_CDS"/>
    <property type="molecule type" value="Genomic_DNA"/>
</dbReference>
<dbReference type="EMBL" id="AC093701">
    <property type="status" value="NOT_ANNOTATED_CDS"/>
    <property type="molecule type" value="Genomic_DNA"/>
</dbReference>
<dbReference type="EMBL" id="CH236947">
    <property type="protein sequence ID" value="EAL24412.1"/>
    <property type="molecule type" value="Genomic_DNA"/>
</dbReference>
<dbReference type="EMBL" id="CH471070">
    <property type="protein sequence ID" value="EAW83332.1"/>
    <property type="molecule type" value="Genomic_DNA"/>
</dbReference>
<dbReference type="EMBL" id="BC002589">
    <property type="protein sequence ID" value="AAH02589.1"/>
    <property type="molecule type" value="mRNA"/>
</dbReference>
<dbReference type="CCDS" id="CCDS5731.1">
    <molecule id="P35998-1"/>
</dbReference>
<dbReference type="PIR" id="S24353">
    <property type="entry name" value="S24353"/>
</dbReference>
<dbReference type="RefSeq" id="NP_001191382.1">
    <property type="nucleotide sequence ID" value="NM_001204453.1"/>
</dbReference>
<dbReference type="RefSeq" id="NP_002794.1">
    <molecule id="P35998-1"/>
    <property type="nucleotide sequence ID" value="NM_002803.4"/>
</dbReference>
<dbReference type="PDB" id="5GJQ">
    <property type="method" value="EM"/>
    <property type="resolution" value="4.50 A"/>
    <property type="chains" value="H=1-433"/>
</dbReference>
<dbReference type="PDB" id="5GJR">
    <property type="method" value="EM"/>
    <property type="resolution" value="3.50 A"/>
    <property type="chains" value="H/v=1-433"/>
</dbReference>
<dbReference type="PDB" id="5L4G">
    <property type="method" value="EM"/>
    <property type="resolution" value="4.02 A"/>
    <property type="chains" value="H=1-433"/>
</dbReference>
<dbReference type="PDB" id="5LN3">
    <property type="method" value="EM"/>
    <property type="resolution" value="6.80 A"/>
    <property type="chains" value="H=1-433"/>
</dbReference>
<dbReference type="PDB" id="5M32">
    <property type="method" value="EM"/>
    <property type="resolution" value="3.80 A"/>
    <property type="chains" value="c=1-433"/>
</dbReference>
<dbReference type="PDB" id="5T0C">
    <property type="method" value="EM"/>
    <property type="resolution" value="3.80 A"/>
    <property type="chains" value="AA/BA=1-433"/>
</dbReference>
<dbReference type="PDB" id="5T0G">
    <property type="method" value="EM"/>
    <property type="resolution" value="4.40 A"/>
    <property type="chains" value="A=1-433"/>
</dbReference>
<dbReference type="PDB" id="5T0H">
    <property type="method" value="EM"/>
    <property type="resolution" value="6.80 A"/>
    <property type="chains" value="A=1-433"/>
</dbReference>
<dbReference type="PDB" id="5T0I">
    <property type="method" value="EM"/>
    <property type="resolution" value="8.00 A"/>
    <property type="chains" value="A=1-433"/>
</dbReference>
<dbReference type="PDB" id="5T0J">
    <property type="method" value="EM"/>
    <property type="resolution" value="8.00 A"/>
    <property type="chains" value="A=1-433"/>
</dbReference>
<dbReference type="PDB" id="5VFP">
    <property type="method" value="EM"/>
    <property type="resolution" value="4.20 A"/>
    <property type="chains" value="A=35-433"/>
</dbReference>
<dbReference type="PDB" id="5VFQ">
    <property type="method" value="EM"/>
    <property type="resolution" value="4.20 A"/>
    <property type="chains" value="A=35-433"/>
</dbReference>
<dbReference type="PDB" id="5VFR">
    <property type="method" value="EM"/>
    <property type="resolution" value="4.90 A"/>
    <property type="chains" value="A=35-433"/>
</dbReference>
<dbReference type="PDB" id="5VFS">
    <property type="method" value="EM"/>
    <property type="resolution" value="3.60 A"/>
    <property type="chains" value="A=1-433"/>
</dbReference>
<dbReference type="PDB" id="5VFT">
    <property type="method" value="EM"/>
    <property type="resolution" value="7.00 A"/>
    <property type="chains" value="A=73-433"/>
</dbReference>
<dbReference type="PDB" id="5VFU">
    <property type="method" value="EM"/>
    <property type="resolution" value="5.80 A"/>
    <property type="chains" value="A=73-433"/>
</dbReference>
<dbReference type="PDB" id="5VGZ">
    <property type="method" value="EM"/>
    <property type="resolution" value="3.70 A"/>
    <property type="chains" value="A=73-155"/>
</dbReference>
<dbReference type="PDB" id="5VHF">
    <property type="method" value="EM"/>
    <property type="resolution" value="5.70 A"/>
    <property type="chains" value="A=73-424"/>
</dbReference>
<dbReference type="PDB" id="5VHH">
    <property type="method" value="EM"/>
    <property type="resolution" value="6.10 A"/>
    <property type="chains" value="A=73-424"/>
</dbReference>
<dbReference type="PDB" id="5VHI">
    <property type="method" value="EM"/>
    <property type="resolution" value="6.80 A"/>
    <property type="chains" value="A=73-424"/>
</dbReference>
<dbReference type="PDB" id="5VHJ">
    <property type="method" value="EM"/>
    <property type="resolution" value="8.50 A"/>
    <property type="chains" value="A=180-424"/>
</dbReference>
<dbReference type="PDB" id="5VHM">
    <property type="method" value="EM"/>
    <property type="resolution" value="8.30 A"/>
    <property type="chains" value="A=159-424"/>
</dbReference>
<dbReference type="PDB" id="5VHN">
    <property type="method" value="EM"/>
    <property type="resolution" value="7.30 A"/>
    <property type="chains" value="A=159-424"/>
</dbReference>
<dbReference type="PDB" id="5VHO">
    <property type="method" value="EM"/>
    <property type="resolution" value="8.30 A"/>
    <property type="chains" value="A=158-424"/>
</dbReference>
<dbReference type="PDB" id="5VHP">
    <property type="method" value="EM"/>
    <property type="resolution" value="7.90 A"/>
    <property type="chains" value="A=159-424"/>
</dbReference>
<dbReference type="PDB" id="5VHQ">
    <property type="method" value="EM"/>
    <property type="resolution" value="8.90 A"/>
    <property type="chains" value="A=159-424"/>
</dbReference>
<dbReference type="PDB" id="5VHR">
    <property type="method" value="EM"/>
    <property type="resolution" value="7.70 A"/>
    <property type="chains" value="A=159-424"/>
</dbReference>
<dbReference type="PDB" id="5VHS">
    <property type="method" value="EM"/>
    <property type="resolution" value="8.80 A"/>
    <property type="chains" value="A=73-424"/>
</dbReference>
<dbReference type="PDB" id="6MSB">
    <property type="method" value="EM"/>
    <property type="resolution" value="3.00 A"/>
    <property type="chains" value="A=1-433"/>
</dbReference>
<dbReference type="PDB" id="6MSD">
    <property type="method" value="EM"/>
    <property type="resolution" value="3.20 A"/>
    <property type="chains" value="A=1-433"/>
</dbReference>
<dbReference type="PDB" id="6MSE">
    <property type="method" value="EM"/>
    <property type="resolution" value="3.30 A"/>
    <property type="chains" value="M/m=94-136"/>
</dbReference>
<dbReference type="PDB" id="6MSG">
    <property type="method" value="EM"/>
    <property type="resolution" value="3.50 A"/>
    <property type="chains" value="A=1-433"/>
</dbReference>
<dbReference type="PDB" id="6MSH">
    <property type="method" value="EM"/>
    <property type="resolution" value="3.60 A"/>
    <property type="chains" value="A=1-433"/>
</dbReference>
<dbReference type="PDB" id="6MSJ">
    <property type="method" value="EM"/>
    <property type="resolution" value="3.30 A"/>
    <property type="chains" value="A=1-433"/>
</dbReference>
<dbReference type="PDB" id="6MSK">
    <property type="method" value="EM"/>
    <property type="resolution" value="3.20 A"/>
    <property type="chains" value="A=1-433"/>
</dbReference>
<dbReference type="PDB" id="6WJD">
    <property type="method" value="EM"/>
    <property type="resolution" value="4.80 A"/>
    <property type="chains" value="A=1-433"/>
</dbReference>
<dbReference type="PDB" id="6WJN">
    <property type="method" value="EM"/>
    <property type="resolution" value="5.70 A"/>
    <property type="chains" value="A=35-433"/>
</dbReference>
<dbReference type="PDB" id="7QXN">
    <property type="method" value="EM"/>
    <property type="resolution" value="3.70 A"/>
    <property type="chains" value="A=1-433"/>
</dbReference>
<dbReference type="PDB" id="7QXP">
    <property type="method" value="EM"/>
    <property type="resolution" value="3.60 A"/>
    <property type="chains" value="A=1-433"/>
</dbReference>
<dbReference type="PDB" id="7QXU">
    <property type="method" value="EM"/>
    <property type="resolution" value="4.30 A"/>
    <property type="chains" value="A=1-433"/>
</dbReference>
<dbReference type="PDB" id="7QXW">
    <property type="method" value="EM"/>
    <property type="resolution" value="4.10 A"/>
    <property type="chains" value="A=1-433"/>
</dbReference>
<dbReference type="PDB" id="7QXX">
    <property type="method" value="EM"/>
    <property type="resolution" value="4.40 A"/>
    <property type="chains" value="A=1-433"/>
</dbReference>
<dbReference type="PDB" id="7QY7">
    <property type="method" value="EM"/>
    <property type="resolution" value="4.70 A"/>
    <property type="chains" value="A=1-433"/>
</dbReference>
<dbReference type="PDB" id="7QYA">
    <property type="method" value="EM"/>
    <property type="resolution" value="4.80 A"/>
    <property type="chains" value="A=1-433"/>
</dbReference>
<dbReference type="PDB" id="7QYB">
    <property type="method" value="EM"/>
    <property type="resolution" value="4.10 A"/>
    <property type="chains" value="A=1-433"/>
</dbReference>
<dbReference type="PDB" id="7W37">
    <property type="method" value="EM"/>
    <property type="resolution" value="3.00 A"/>
    <property type="chains" value="A=1-433"/>
</dbReference>
<dbReference type="PDB" id="7W38">
    <property type="method" value="EM"/>
    <property type="resolution" value="3.10 A"/>
    <property type="chains" value="A=1-433"/>
</dbReference>
<dbReference type="PDB" id="7W39">
    <property type="method" value="EM"/>
    <property type="resolution" value="3.20 A"/>
    <property type="chains" value="A=1-433"/>
</dbReference>
<dbReference type="PDB" id="7W3A">
    <property type="method" value="EM"/>
    <property type="resolution" value="3.50 A"/>
    <property type="chains" value="A=1-433"/>
</dbReference>
<dbReference type="PDB" id="7W3B">
    <property type="method" value="EM"/>
    <property type="resolution" value="3.60 A"/>
    <property type="chains" value="A=1-433"/>
</dbReference>
<dbReference type="PDB" id="7W3C">
    <property type="method" value="EM"/>
    <property type="resolution" value="3.40 A"/>
    <property type="chains" value="A=1-433"/>
</dbReference>
<dbReference type="PDB" id="7W3F">
    <property type="method" value="EM"/>
    <property type="resolution" value="3.30 A"/>
    <property type="chains" value="A=1-433"/>
</dbReference>
<dbReference type="PDB" id="7W3G">
    <property type="method" value="EM"/>
    <property type="resolution" value="3.20 A"/>
    <property type="chains" value="A=1-433"/>
</dbReference>
<dbReference type="PDB" id="7W3H">
    <property type="method" value="EM"/>
    <property type="resolution" value="3.20 A"/>
    <property type="chains" value="A=1-433"/>
</dbReference>
<dbReference type="PDB" id="7W3I">
    <property type="method" value="EM"/>
    <property type="resolution" value="3.50 A"/>
    <property type="chains" value="A=1-433"/>
</dbReference>
<dbReference type="PDB" id="7W3J">
    <property type="method" value="EM"/>
    <property type="resolution" value="3.50 A"/>
    <property type="chains" value="A=1-433"/>
</dbReference>
<dbReference type="PDB" id="7W3K">
    <property type="method" value="EM"/>
    <property type="resolution" value="3.60 A"/>
    <property type="chains" value="A=1-433"/>
</dbReference>
<dbReference type="PDB" id="7W3M">
    <property type="method" value="EM"/>
    <property type="resolution" value="3.50 A"/>
    <property type="chains" value="A=1-433"/>
</dbReference>
<dbReference type="PDB" id="8CVT">
    <property type="method" value="EM"/>
    <property type="resolution" value="3.00 A"/>
    <property type="chains" value="A=1-433"/>
</dbReference>
<dbReference type="PDB" id="8JRI">
    <property type="method" value="EM"/>
    <property type="resolution" value="3.40 A"/>
    <property type="chains" value="A=1-433"/>
</dbReference>
<dbReference type="PDB" id="8JRT">
    <property type="method" value="EM"/>
    <property type="resolution" value="3.60 A"/>
    <property type="chains" value="A=1-433"/>
</dbReference>
<dbReference type="PDB" id="8JTI">
    <property type="method" value="EM"/>
    <property type="resolution" value="3.80 A"/>
    <property type="chains" value="A=1-433"/>
</dbReference>
<dbReference type="PDB" id="8K0G">
    <property type="method" value="EM"/>
    <property type="resolution" value="3.80 A"/>
    <property type="chains" value="A=1-433"/>
</dbReference>
<dbReference type="PDB" id="8USB">
    <property type="method" value="EM"/>
    <property type="resolution" value="2.73 A"/>
    <property type="chains" value="A=1-433"/>
</dbReference>
<dbReference type="PDB" id="8USC">
    <property type="method" value="EM"/>
    <property type="resolution" value="3.10 A"/>
    <property type="chains" value="A=1-433"/>
</dbReference>
<dbReference type="PDB" id="8USD">
    <property type="method" value="EM"/>
    <property type="resolution" value="2.70 A"/>
    <property type="chains" value="A=1-433"/>
</dbReference>
<dbReference type="PDB" id="9E8G">
    <property type="method" value="EM"/>
    <property type="resolution" value="3.01 A"/>
    <property type="chains" value="A=1-433"/>
</dbReference>
<dbReference type="PDB" id="9E8H">
    <property type="method" value="EM"/>
    <property type="resolution" value="2.90 A"/>
    <property type="chains" value="A=1-433"/>
</dbReference>
<dbReference type="PDB" id="9E8I">
    <property type="method" value="EM"/>
    <property type="resolution" value="2.87 A"/>
    <property type="chains" value="A=1-433"/>
</dbReference>
<dbReference type="PDB" id="9E8J">
    <property type="method" value="EM"/>
    <property type="resolution" value="3.47 A"/>
    <property type="chains" value="A=1-433"/>
</dbReference>
<dbReference type="PDB" id="9E8K">
    <property type="method" value="EM"/>
    <property type="resolution" value="4.08 A"/>
    <property type="chains" value="A=1-433"/>
</dbReference>
<dbReference type="PDB" id="9E8L">
    <property type="method" value="EM"/>
    <property type="resolution" value="3.59 A"/>
    <property type="chains" value="A=1-433"/>
</dbReference>
<dbReference type="PDB" id="9E8N">
    <property type="method" value="EM"/>
    <property type="resolution" value="3.62 A"/>
    <property type="chains" value="A=1-433"/>
</dbReference>
<dbReference type="PDB" id="9E8O">
    <property type="method" value="EM"/>
    <property type="resolution" value="3.10 A"/>
    <property type="chains" value="A=1-433"/>
</dbReference>
<dbReference type="PDB" id="9E8Q">
    <property type="method" value="EM"/>
    <property type="resolution" value="3.16 A"/>
    <property type="chains" value="A=1-433"/>
</dbReference>
<dbReference type="PDBsum" id="5GJQ"/>
<dbReference type="PDBsum" id="5GJR"/>
<dbReference type="PDBsum" id="5L4G"/>
<dbReference type="PDBsum" id="5LN3"/>
<dbReference type="PDBsum" id="5M32"/>
<dbReference type="PDBsum" id="5T0C"/>
<dbReference type="PDBsum" id="5T0G"/>
<dbReference type="PDBsum" id="5T0H"/>
<dbReference type="PDBsum" id="5T0I"/>
<dbReference type="PDBsum" id="5T0J"/>
<dbReference type="PDBsum" id="5VFP"/>
<dbReference type="PDBsum" id="5VFQ"/>
<dbReference type="PDBsum" id="5VFR"/>
<dbReference type="PDBsum" id="5VFS"/>
<dbReference type="PDBsum" id="5VFT"/>
<dbReference type="PDBsum" id="5VFU"/>
<dbReference type="PDBsum" id="5VGZ"/>
<dbReference type="PDBsum" id="5VHF"/>
<dbReference type="PDBsum" id="5VHH"/>
<dbReference type="PDBsum" id="5VHI"/>
<dbReference type="PDBsum" id="5VHJ"/>
<dbReference type="PDBsum" id="5VHM"/>
<dbReference type="PDBsum" id="5VHN"/>
<dbReference type="PDBsum" id="5VHO"/>
<dbReference type="PDBsum" id="5VHP"/>
<dbReference type="PDBsum" id="5VHQ"/>
<dbReference type="PDBsum" id="5VHR"/>
<dbReference type="PDBsum" id="5VHS"/>
<dbReference type="PDBsum" id="6MSB"/>
<dbReference type="PDBsum" id="6MSD"/>
<dbReference type="PDBsum" id="6MSE"/>
<dbReference type="PDBsum" id="6MSG"/>
<dbReference type="PDBsum" id="6MSH"/>
<dbReference type="PDBsum" id="6MSJ"/>
<dbReference type="PDBsum" id="6MSK"/>
<dbReference type="PDBsum" id="6WJD"/>
<dbReference type="PDBsum" id="6WJN"/>
<dbReference type="PDBsum" id="7QXN"/>
<dbReference type="PDBsum" id="7QXP"/>
<dbReference type="PDBsum" id="7QXU"/>
<dbReference type="PDBsum" id="7QXW"/>
<dbReference type="PDBsum" id="7QXX"/>
<dbReference type="PDBsum" id="7QY7"/>
<dbReference type="PDBsum" id="7QYA"/>
<dbReference type="PDBsum" id="7QYB"/>
<dbReference type="PDBsum" id="7W37"/>
<dbReference type="PDBsum" id="7W38"/>
<dbReference type="PDBsum" id="7W39"/>
<dbReference type="PDBsum" id="7W3A"/>
<dbReference type="PDBsum" id="7W3B"/>
<dbReference type="PDBsum" id="7W3C"/>
<dbReference type="PDBsum" id="7W3F"/>
<dbReference type="PDBsum" id="7W3G"/>
<dbReference type="PDBsum" id="7W3H"/>
<dbReference type="PDBsum" id="7W3I"/>
<dbReference type="PDBsum" id="7W3J"/>
<dbReference type="PDBsum" id="7W3K"/>
<dbReference type="PDBsum" id="7W3M"/>
<dbReference type="PDBsum" id="8CVT"/>
<dbReference type="PDBsum" id="8JRI"/>
<dbReference type="PDBsum" id="8JRT"/>
<dbReference type="PDBsum" id="8JTI"/>
<dbReference type="PDBsum" id="8K0G"/>
<dbReference type="PDBsum" id="8USB"/>
<dbReference type="PDBsum" id="8USC"/>
<dbReference type="PDBsum" id="8USD"/>
<dbReference type="PDBsum" id="9E8G"/>
<dbReference type="PDBsum" id="9E8H"/>
<dbReference type="PDBsum" id="9E8I"/>
<dbReference type="PDBsum" id="9E8J"/>
<dbReference type="PDBsum" id="9E8K"/>
<dbReference type="PDBsum" id="9E8L"/>
<dbReference type="PDBsum" id="9E8N"/>
<dbReference type="PDBsum" id="9E8O"/>
<dbReference type="PDBsum" id="9E8Q"/>
<dbReference type="EMDB" id="EMD-14201"/>
<dbReference type="EMDB" id="EMD-14202"/>
<dbReference type="EMDB" id="EMD-14203"/>
<dbReference type="EMDB" id="EMD-14204"/>
<dbReference type="EMDB" id="EMD-14205"/>
<dbReference type="EMDB" id="EMD-14209"/>
<dbReference type="EMDB" id="EMD-14210"/>
<dbReference type="EMDB" id="EMD-14211"/>
<dbReference type="EMDB" id="EMD-21691"/>
<dbReference type="EMDB" id="EMD-21696"/>
<dbReference type="EMDB" id="EMD-27018"/>
<dbReference type="EMDB" id="EMD-32272"/>
<dbReference type="EMDB" id="EMD-32273"/>
<dbReference type="EMDB" id="EMD-32274"/>
<dbReference type="EMDB" id="EMD-32275"/>
<dbReference type="EMDB" id="EMD-32276"/>
<dbReference type="EMDB" id="EMD-32277"/>
<dbReference type="EMDB" id="EMD-32278"/>
<dbReference type="EMDB" id="EMD-32279"/>
<dbReference type="EMDB" id="EMD-32280"/>
<dbReference type="EMDB" id="EMD-32281"/>
<dbReference type="EMDB" id="EMD-32282"/>
<dbReference type="EMDB" id="EMD-32283"/>
<dbReference type="EMDB" id="EMD-32284"/>
<dbReference type="EMDB" id="EMD-36598"/>
<dbReference type="EMDB" id="EMD-36605"/>
<dbReference type="EMDB" id="EMD-36645"/>
<dbReference type="EMDB" id="EMD-36764"/>
<dbReference type="EMDB" id="EMD-4089"/>
<dbReference type="EMDB" id="EMD-4146"/>
<dbReference type="EMDB" id="EMD-42506"/>
<dbReference type="EMDB" id="EMD-42507"/>
<dbReference type="EMDB" id="EMD-42508"/>
<dbReference type="EMDB" id="EMD-47719"/>
<dbReference type="EMDB" id="EMD-47720"/>
<dbReference type="EMDB" id="EMD-47721"/>
<dbReference type="EMDB" id="EMD-47722"/>
<dbReference type="EMDB" id="EMD-47723"/>
<dbReference type="EMDB" id="EMD-47724"/>
<dbReference type="EMDB" id="EMD-47725"/>
<dbReference type="EMDB" id="EMD-47726"/>
<dbReference type="EMDB" id="EMD-47727"/>
<dbReference type="EMDB" id="EMD-60138"/>
<dbReference type="EMDB" id="EMD-60139"/>
<dbReference type="EMDB" id="EMD-8663"/>
<dbReference type="EMDB" id="EMD-8664"/>
<dbReference type="EMDB" id="EMD-8665"/>
<dbReference type="EMDB" id="EMD-8666"/>
<dbReference type="EMDB" id="EMD-8667"/>
<dbReference type="EMDB" id="EMD-8668"/>
<dbReference type="EMDB" id="EMD-8672"/>
<dbReference type="EMDB" id="EMD-8674"/>
<dbReference type="EMDB" id="EMD-8675"/>
<dbReference type="EMDB" id="EMD-8676"/>
<dbReference type="EMDB" id="EMD-8677"/>
<dbReference type="EMDB" id="EMD-8678"/>
<dbReference type="EMDB" id="EMD-8679"/>
<dbReference type="EMDB" id="EMD-8680"/>
<dbReference type="EMDB" id="EMD-8681"/>
<dbReference type="EMDB" id="EMD-8682"/>
<dbReference type="EMDB" id="EMD-8683"/>
<dbReference type="EMDB" id="EMD-8684"/>
<dbReference type="EMDB" id="EMD-9216"/>
<dbReference type="EMDB" id="EMD-9217"/>
<dbReference type="EMDB" id="EMD-9218"/>
<dbReference type="EMDB" id="EMD-9219"/>
<dbReference type="EMDB" id="EMD-9220"/>
<dbReference type="EMDB" id="EMD-9221"/>
<dbReference type="EMDB" id="EMD-9222"/>
<dbReference type="EMDB" id="EMD-9511"/>
<dbReference type="EMDB" id="EMD-9512"/>
<dbReference type="SMR" id="P35998"/>
<dbReference type="BioGRID" id="111674">
    <property type="interactions" value="397"/>
</dbReference>
<dbReference type="ComplexPortal" id="CPX-5993">
    <property type="entry name" value="26S proteasome complex"/>
</dbReference>
<dbReference type="ComplexPortal" id="CPX-8964">
    <property type="entry name" value="19S proteasome regulatory complex"/>
</dbReference>
<dbReference type="ComplexPortal" id="CPX-9082">
    <property type="entry name" value="19S-20S-PA28-alphabeta hybrid proteasome complex"/>
</dbReference>
<dbReference type="ComplexPortal" id="CPX-9085">
    <property type="entry name" value="19S-20S-PA28-gamma hybrid proteasome complex"/>
</dbReference>
<dbReference type="ComplexPortal" id="CPX-9086">
    <property type="entry name" value="30S proteasome complex"/>
</dbReference>
<dbReference type="CORUM" id="P35998"/>
<dbReference type="DIP" id="DIP-27554N"/>
<dbReference type="FunCoup" id="P35998">
    <property type="interactions" value="2476"/>
</dbReference>
<dbReference type="IntAct" id="P35998">
    <property type="interactions" value="160"/>
</dbReference>
<dbReference type="MINT" id="P35998"/>
<dbReference type="STRING" id="9606.ENSP00000391211"/>
<dbReference type="ChEMBL" id="CHEMBL2364701"/>
<dbReference type="GlyGen" id="P35998">
    <property type="glycosylation" value="2 sites, 1 N-linked glycan (1 site), 1 O-linked glycan (1 site)"/>
</dbReference>
<dbReference type="iPTMnet" id="P35998"/>
<dbReference type="MetOSite" id="P35998"/>
<dbReference type="PhosphoSitePlus" id="P35998"/>
<dbReference type="SwissPalm" id="P35998"/>
<dbReference type="BioMuta" id="PSMC2"/>
<dbReference type="DMDM" id="547930"/>
<dbReference type="OGP" id="P35998"/>
<dbReference type="REPRODUCTION-2DPAGE" id="IPI00021435"/>
<dbReference type="REPRODUCTION-2DPAGE" id="P35998"/>
<dbReference type="jPOST" id="P35998"/>
<dbReference type="MassIVE" id="P35998"/>
<dbReference type="PaxDb" id="9606-ENSP00000391211"/>
<dbReference type="PeptideAtlas" id="P35998"/>
<dbReference type="ProteomicsDB" id="55172">
    <molecule id="P35998-1"/>
</dbReference>
<dbReference type="ProteomicsDB" id="6682"/>
<dbReference type="Pumba" id="P35998"/>
<dbReference type="Antibodypedia" id="16901">
    <property type="antibodies" value="374 antibodies from 34 providers"/>
</dbReference>
<dbReference type="DNASU" id="5701"/>
<dbReference type="Ensembl" id="ENST00000292644.5">
    <molecule id="P35998-1"/>
    <property type="protein sequence ID" value="ENSP00000292644.3"/>
    <property type="gene ID" value="ENSG00000161057.13"/>
</dbReference>
<dbReference type="Ensembl" id="ENST00000435765.5">
    <molecule id="P35998-1"/>
    <property type="protein sequence ID" value="ENSP00000391211.1"/>
    <property type="gene ID" value="ENSG00000161057.13"/>
</dbReference>
<dbReference type="Ensembl" id="ENST00000678493.1">
    <molecule id="P35998-1"/>
    <property type="protein sequence ID" value="ENSP00000502939.1"/>
    <property type="gene ID" value="ENSG00000161057.13"/>
</dbReference>
<dbReference type="Ensembl" id="ENST00000679205.1">
    <molecule id="P35998-1"/>
    <property type="protein sequence ID" value="ENSP00000503179.1"/>
    <property type="gene ID" value="ENSG00000161057.13"/>
</dbReference>
<dbReference type="Ensembl" id="ENST00000679250.1">
    <molecule id="P35998-2"/>
    <property type="protein sequence ID" value="ENSP00000503663.1"/>
    <property type="gene ID" value="ENSG00000161057.13"/>
</dbReference>
<dbReference type="Ensembl" id="ENST00000679341.1">
    <molecule id="P35998-1"/>
    <property type="protein sequence ID" value="ENSP00000504608.1"/>
    <property type="gene ID" value="ENSG00000161057.13"/>
</dbReference>
<dbReference type="GeneID" id="5701"/>
<dbReference type="KEGG" id="hsa:5701"/>
<dbReference type="MANE-Select" id="ENST00000292644.5">
    <property type="protein sequence ID" value="ENSP00000292644.3"/>
    <property type="RefSeq nucleotide sequence ID" value="NM_002803.4"/>
    <property type="RefSeq protein sequence ID" value="NP_002794.1"/>
</dbReference>
<dbReference type="UCSC" id="uc003vbs.4">
    <molecule id="P35998-1"/>
    <property type="organism name" value="human"/>
</dbReference>
<dbReference type="AGR" id="HGNC:9548"/>
<dbReference type="CTD" id="5701"/>
<dbReference type="DisGeNET" id="5701"/>
<dbReference type="GeneCards" id="PSMC2"/>
<dbReference type="HGNC" id="HGNC:9548">
    <property type="gene designation" value="PSMC2"/>
</dbReference>
<dbReference type="HPA" id="ENSG00000161057">
    <property type="expression patterns" value="Low tissue specificity"/>
</dbReference>
<dbReference type="MIM" id="154365">
    <property type="type" value="gene"/>
</dbReference>
<dbReference type="neXtProt" id="NX_P35998"/>
<dbReference type="OpenTargets" id="ENSG00000161057"/>
<dbReference type="PharmGKB" id="PA33893"/>
<dbReference type="VEuPathDB" id="HostDB:ENSG00000161057"/>
<dbReference type="eggNOG" id="KOG0729">
    <property type="taxonomic scope" value="Eukaryota"/>
</dbReference>
<dbReference type="GeneTree" id="ENSGT01020000230346"/>
<dbReference type="HOGENOM" id="CLU_000688_6_1_1"/>
<dbReference type="InParanoid" id="P35998"/>
<dbReference type="OMA" id="RSKYHIE"/>
<dbReference type="OrthoDB" id="1664597at2759"/>
<dbReference type="PAN-GO" id="P35998">
    <property type="GO annotations" value="3 GO annotations based on evolutionary models"/>
</dbReference>
<dbReference type="PhylomeDB" id="P35998"/>
<dbReference type="TreeFam" id="TF105661"/>
<dbReference type="PathwayCommons" id="P35998"/>
<dbReference type="Reactome" id="R-HSA-1169091">
    <property type="pathway name" value="Activation of NF-kappaB in B cells"/>
</dbReference>
<dbReference type="Reactome" id="R-HSA-1234176">
    <property type="pathway name" value="Oxygen-dependent proline hydroxylation of Hypoxia-inducible Factor Alpha"/>
</dbReference>
<dbReference type="Reactome" id="R-HSA-1236974">
    <property type="pathway name" value="ER-Phagosome pathway"/>
</dbReference>
<dbReference type="Reactome" id="R-HSA-1236978">
    <property type="pathway name" value="Cross-presentation of soluble exogenous antigens (endosomes)"/>
</dbReference>
<dbReference type="Reactome" id="R-HSA-174084">
    <property type="pathway name" value="Autodegradation of Cdh1 by Cdh1:APC/C"/>
</dbReference>
<dbReference type="Reactome" id="R-HSA-174113">
    <property type="pathway name" value="SCF-beta-TrCP mediated degradation of Emi1"/>
</dbReference>
<dbReference type="Reactome" id="R-HSA-174154">
    <property type="pathway name" value="APC/C:Cdc20 mediated degradation of Securin"/>
</dbReference>
<dbReference type="Reactome" id="R-HSA-174178">
    <property type="pathway name" value="APC/C:Cdh1 mediated degradation of Cdc20 and other APC/C:Cdh1 targeted proteins in late mitosis/early G1"/>
</dbReference>
<dbReference type="Reactome" id="R-HSA-174184">
    <property type="pathway name" value="Cdc20:Phospho-APC/C mediated degradation of Cyclin A"/>
</dbReference>
<dbReference type="Reactome" id="R-HSA-180534">
    <property type="pathway name" value="Vpu mediated degradation of CD4"/>
</dbReference>
<dbReference type="Reactome" id="R-HSA-180585">
    <property type="pathway name" value="Vif-mediated degradation of APOBEC3G"/>
</dbReference>
<dbReference type="Reactome" id="R-HSA-187577">
    <property type="pathway name" value="SCF(Skp2)-mediated degradation of p27/p21"/>
</dbReference>
<dbReference type="Reactome" id="R-HSA-195253">
    <property type="pathway name" value="Degradation of beta-catenin by the destruction complex"/>
</dbReference>
<dbReference type="Reactome" id="R-HSA-202424">
    <property type="pathway name" value="Downstream TCR signaling"/>
</dbReference>
<dbReference type="Reactome" id="R-HSA-211733">
    <property type="pathway name" value="Regulation of activated PAK-2p34 by proteasome mediated degradation"/>
</dbReference>
<dbReference type="Reactome" id="R-HSA-2467813">
    <property type="pathway name" value="Separation of Sister Chromatids"/>
</dbReference>
<dbReference type="Reactome" id="R-HSA-2871837">
    <property type="pathway name" value="FCERI mediated NF-kB activation"/>
</dbReference>
<dbReference type="Reactome" id="R-HSA-349425">
    <property type="pathway name" value="Autodegradation of the E3 ubiquitin ligase COP1"/>
</dbReference>
<dbReference type="Reactome" id="R-HSA-350562">
    <property type="pathway name" value="Regulation of ornithine decarboxylase (ODC)"/>
</dbReference>
<dbReference type="Reactome" id="R-HSA-382556">
    <property type="pathway name" value="ABC-family proteins mediated transport"/>
</dbReference>
<dbReference type="Reactome" id="R-HSA-450408">
    <property type="pathway name" value="AUF1 (hnRNP D0) binds and destabilizes mRNA"/>
</dbReference>
<dbReference type="Reactome" id="R-HSA-4608870">
    <property type="pathway name" value="Asymmetric localization of PCP proteins"/>
</dbReference>
<dbReference type="Reactome" id="R-HSA-4641257">
    <property type="pathway name" value="Degradation of AXIN"/>
</dbReference>
<dbReference type="Reactome" id="R-HSA-4641258">
    <property type="pathway name" value="Degradation of DVL"/>
</dbReference>
<dbReference type="Reactome" id="R-HSA-5358346">
    <property type="pathway name" value="Hedgehog ligand biogenesis"/>
</dbReference>
<dbReference type="Reactome" id="R-HSA-5362768">
    <property type="pathway name" value="Hh mutants are degraded by ERAD"/>
</dbReference>
<dbReference type="Reactome" id="R-HSA-5607761">
    <property type="pathway name" value="Dectin-1 mediated noncanonical NF-kB signaling"/>
</dbReference>
<dbReference type="Reactome" id="R-HSA-5607764">
    <property type="pathway name" value="CLEC7A (Dectin-1) signaling"/>
</dbReference>
<dbReference type="Reactome" id="R-HSA-5610780">
    <property type="pathway name" value="Degradation of GLI1 by the proteasome"/>
</dbReference>
<dbReference type="Reactome" id="R-HSA-5610783">
    <property type="pathway name" value="Degradation of GLI2 by the proteasome"/>
</dbReference>
<dbReference type="Reactome" id="R-HSA-5610785">
    <property type="pathway name" value="GLI3 is processed to GLI3R by the proteasome"/>
</dbReference>
<dbReference type="Reactome" id="R-HSA-5632684">
    <property type="pathway name" value="Hedgehog 'on' state"/>
</dbReference>
<dbReference type="Reactome" id="R-HSA-5658442">
    <property type="pathway name" value="Regulation of RAS by GAPs"/>
</dbReference>
<dbReference type="Reactome" id="R-HSA-5668541">
    <property type="pathway name" value="TNFR2 non-canonical NF-kB pathway"/>
</dbReference>
<dbReference type="Reactome" id="R-HSA-5676590">
    <property type="pathway name" value="NIK--&gt;noncanonical NF-kB signaling"/>
</dbReference>
<dbReference type="Reactome" id="R-HSA-5678895">
    <property type="pathway name" value="Defective CFTR causes cystic fibrosis"/>
</dbReference>
<dbReference type="Reactome" id="R-HSA-5687128">
    <property type="pathway name" value="MAPK6/MAPK4 signaling"/>
</dbReference>
<dbReference type="Reactome" id="R-HSA-5689603">
    <property type="pathway name" value="UCH proteinases"/>
</dbReference>
<dbReference type="Reactome" id="R-HSA-5689880">
    <property type="pathway name" value="Ub-specific processing proteases"/>
</dbReference>
<dbReference type="Reactome" id="R-HSA-6798695">
    <property type="pathway name" value="Neutrophil degranulation"/>
</dbReference>
<dbReference type="Reactome" id="R-HSA-68867">
    <property type="pathway name" value="Assembly of the pre-replicative complex"/>
</dbReference>
<dbReference type="Reactome" id="R-HSA-68949">
    <property type="pathway name" value="Orc1 removal from chromatin"/>
</dbReference>
<dbReference type="Reactome" id="R-HSA-69017">
    <property type="pathway name" value="CDK-mediated phosphorylation and removal of Cdc6"/>
</dbReference>
<dbReference type="Reactome" id="R-HSA-69481">
    <property type="pathway name" value="G2/M Checkpoints"/>
</dbReference>
<dbReference type="Reactome" id="R-HSA-69601">
    <property type="pathway name" value="Ubiquitin Mediated Degradation of Phosphorylated Cdc25A"/>
</dbReference>
<dbReference type="Reactome" id="R-HSA-75815">
    <property type="pathway name" value="Ubiquitin-dependent degradation of Cyclin D"/>
</dbReference>
<dbReference type="Reactome" id="R-HSA-8852276">
    <property type="pathway name" value="The role of GTSE1 in G2/M progression after G2 checkpoint"/>
</dbReference>
<dbReference type="Reactome" id="R-HSA-8854050">
    <property type="pathway name" value="FBXL7 down-regulates AURKA during mitotic entry and in early mitosis"/>
</dbReference>
<dbReference type="Reactome" id="R-HSA-8939236">
    <property type="pathway name" value="RUNX1 regulates transcription of genes involved in differentiation of HSCs"/>
</dbReference>
<dbReference type="Reactome" id="R-HSA-8939902">
    <property type="pathway name" value="Regulation of RUNX2 expression and activity"/>
</dbReference>
<dbReference type="Reactome" id="R-HSA-8941858">
    <property type="pathway name" value="Regulation of RUNX3 expression and activity"/>
</dbReference>
<dbReference type="Reactome" id="R-HSA-8948751">
    <property type="pathway name" value="Regulation of PTEN stability and activity"/>
</dbReference>
<dbReference type="Reactome" id="R-HSA-8951664">
    <property type="pathway name" value="Neddylation"/>
</dbReference>
<dbReference type="Reactome" id="R-HSA-9010553">
    <property type="pathway name" value="Regulation of expression of SLITs and ROBOs"/>
</dbReference>
<dbReference type="Reactome" id="R-HSA-9020702">
    <property type="pathway name" value="Interleukin-1 signaling"/>
</dbReference>
<dbReference type="Reactome" id="R-HSA-9604323">
    <property type="pathway name" value="Negative regulation of NOTCH4 signaling"/>
</dbReference>
<dbReference type="Reactome" id="R-HSA-9755511">
    <property type="pathway name" value="KEAP1-NFE2L2 pathway"/>
</dbReference>
<dbReference type="Reactome" id="R-HSA-9762114">
    <property type="pathway name" value="GSK3B and BTRC:CUL1-mediated-degradation of NFE2L2"/>
</dbReference>
<dbReference type="Reactome" id="R-HSA-9824272">
    <property type="pathway name" value="Somitogenesis"/>
</dbReference>
<dbReference type="Reactome" id="R-HSA-983168">
    <property type="pathway name" value="Antigen processing: Ubiquitination &amp; Proteasome degradation"/>
</dbReference>
<dbReference type="Reactome" id="R-HSA-9907900">
    <property type="pathway name" value="Proteasome assembly"/>
</dbReference>
<dbReference type="SignaLink" id="P35998"/>
<dbReference type="SIGNOR" id="P35998"/>
<dbReference type="BioGRID-ORCS" id="5701">
    <property type="hits" value="756 hits in 1180 CRISPR screens"/>
</dbReference>
<dbReference type="ChiTaRS" id="PSMC2">
    <property type="organism name" value="human"/>
</dbReference>
<dbReference type="GeneWiki" id="PSMC2"/>
<dbReference type="GenomeRNAi" id="5701"/>
<dbReference type="Pharos" id="P35998">
    <property type="development level" value="Tbio"/>
</dbReference>
<dbReference type="PRO" id="PR:P35998"/>
<dbReference type="Proteomes" id="UP000005640">
    <property type="component" value="Chromosome 7"/>
</dbReference>
<dbReference type="RNAct" id="P35998">
    <property type="molecule type" value="protein"/>
</dbReference>
<dbReference type="Bgee" id="ENSG00000161057">
    <property type="expression patterns" value="Expressed in skeletal muscle tissue of biceps brachii and 214 other cell types or tissues"/>
</dbReference>
<dbReference type="ExpressionAtlas" id="P35998">
    <property type="expression patterns" value="baseline and differential"/>
</dbReference>
<dbReference type="GO" id="GO:0005737">
    <property type="term" value="C:cytoplasm"/>
    <property type="evidence" value="ECO:0000304"/>
    <property type="project" value="UniProtKB"/>
</dbReference>
<dbReference type="GO" id="GO:0036464">
    <property type="term" value="C:cytoplasmic ribonucleoprotein granule"/>
    <property type="evidence" value="ECO:0000314"/>
    <property type="project" value="HPA"/>
</dbReference>
<dbReference type="GO" id="GO:0005829">
    <property type="term" value="C:cytosol"/>
    <property type="evidence" value="ECO:0000314"/>
    <property type="project" value="HPA"/>
</dbReference>
<dbReference type="GO" id="GO:0005576">
    <property type="term" value="C:extracellular region"/>
    <property type="evidence" value="ECO:0000304"/>
    <property type="project" value="Reactome"/>
</dbReference>
<dbReference type="GO" id="GO:1904813">
    <property type="term" value="C:ficolin-1-rich granule lumen"/>
    <property type="evidence" value="ECO:0000304"/>
    <property type="project" value="Reactome"/>
</dbReference>
<dbReference type="GO" id="GO:0016020">
    <property type="term" value="C:membrane"/>
    <property type="evidence" value="ECO:0007005"/>
    <property type="project" value="UniProtKB"/>
</dbReference>
<dbReference type="GO" id="GO:0005654">
    <property type="term" value="C:nucleoplasm"/>
    <property type="evidence" value="ECO:0000304"/>
    <property type="project" value="Reactome"/>
</dbReference>
<dbReference type="GO" id="GO:0005634">
    <property type="term" value="C:nucleus"/>
    <property type="evidence" value="ECO:0007005"/>
    <property type="project" value="UniProtKB"/>
</dbReference>
<dbReference type="GO" id="GO:0000932">
    <property type="term" value="C:P-body"/>
    <property type="evidence" value="ECO:0000250"/>
    <property type="project" value="UniProtKB"/>
</dbReference>
<dbReference type="GO" id="GO:0022624">
    <property type="term" value="C:proteasome accessory complex"/>
    <property type="evidence" value="ECO:0000250"/>
    <property type="project" value="UniProtKB"/>
</dbReference>
<dbReference type="GO" id="GO:0000502">
    <property type="term" value="C:proteasome complex"/>
    <property type="evidence" value="ECO:0000314"/>
    <property type="project" value="UniProtKB"/>
</dbReference>
<dbReference type="GO" id="GO:0008540">
    <property type="term" value="C:proteasome regulatory particle, base subcomplex"/>
    <property type="evidence" value="ECO:0000318"/>
    <property type="project" value="GO_Central"/>
</dbReference>
<dbReference type="GO" id="GO:0034774">
    <property type="term" value="C:secretory granule lumen"/>
    <property type="evidence" value="ECO:0000304"/>
    <property type="project" value="Reactome"/>
</dbReference>
<dbReference type="GO" id="GO:0005524">
    <property type="term" value="F:ATP binding"/>
    <property type="evidence" value="ECO:0007669"/>
    <property type="project" value="UniProtKB-KW"/>
</dbReference>
<dbReference type="GO" id="GO:0016887">
    <property type="term" value="F:ATP hydrolysis activity"/>
    <property type="evidence" value="ECO:0007669"/>
    <property type="project" value="InterPro"/>
</dbReference>
<dbReference type="GO" id="GO:0036402">
    <property type="term" value="F:proteasome-activating activity"/>
    <property type="evidence" value="ECO:0000314"/>
    <property type="project" value="UniProtKB"/>
</dbReference>
<dbReference type="GO" id="GO:0001649">
    <property type="term" value="P:osteoblast differentiation"/>
    <property type="evidence" value="ECO:0007005"/>
    <property type="project" value="UniProtKB"/>
</dbReference>
<dbReference type="GO" id="GO:1901800">
    <property type="term" value="P:positive regulation of proteasomal protein catabolic process"/>
    <property type="evidence" value="ECO:0000305"/>
    <property type="project" value="UniProtKB"/>
</dbReference>
<dbReference type="GO" id="GO:0043161">
    <property type="term" value="P:proteasome-mediated ubiquitin-dependent protein catabolic process"/>
    <property type="evidence" value="ECO:0000318"/>
    <property type="project" value="GO_Central"/>
</dbReference>
<dbReference type="GO" id="GO:0006511">
    <property type="term" value="P:ubiquitin-dependent protein catabolic process"/>
    <property type="evidence" value="ECO:0000314"/>
    <property type="project" value="UniProtKB"/>
</dbReference>
<dbReference type="CDD" id="cd19502">
    <property type="entry name" value="RecA-like_PAN_like"/>
    <property type="match status" value="1"/>
</dbReference>
<dbReference type="FunFam" id="1.10.8.60:FF:000005">
    <property type="entry name" value="26S protease regulatory subunit 7"/>
    <property type="match status" value="1"/>
</dbReference>
<dbReference type="FunFam" id="2.40.50.140:FF:000075">
    <property type="entry name" value="26S protease regulatory subunit 7"/>
    <property type="match status" value="1"/>
</dbReference>
<dbReference type="FunFam" id="3.40.50.300:FF:000027">
    <property type="entry name" value="26S protease regulatory subunit 7"/>
    <property type="match status" value="1"/>
</dbReference>
<dbReference type="Gene3D" id="1.10.8.60">
    <property type="match status" value="1"/>
</dbReference>
<dbReference type="Gene3D" id="2.40.50.140">
    <property type="entry name" value="Nucleic acid-binding proteins"/>
    <property type="match status" value="1"/>
</dbReference>
<dbReference type="Gene3D" id="3.40.50.300">
    <property type="entry name" value="P-loop containing nucleotide triphosphate hydrolases"/>
    <property type="match status" value="1"/>
</dbReference>
<dbReference type="InterPro" id="IPR050221">
    <property type="entry name" value="26S_Proteasome_ATPase"/>
</dbReference>
<dbReference type="InterPro" id="IPR003593">
    <property type="entry name" value="AAA+_ATPase"/>
</dbReference>
<dbReference type="InterPro" id="IPR041569">
    <property type="entry name" value="AAA_lid_3"/>
</dbReference>
<dbReference type="InterPro" id="IPR003959">
    <property type="entry name" value="ATPase_AAA_core"/>
</dbReference>
<dbReference type="InterPro" id="IPR003960">
    <property type="entry name" value="ATPase_AAA_CS"/>
</dbReference>
<dbReference type="InterPro" id="IPR012340">
    <property type="entry name" value="NA-bd_OB-fold"/>
</dbReference>
<dbReference type="InterPro" id="IPR027417">
    <property type="entry name" value="P-loop_NTPase"/>
</dbReference>
<dbReference type="InterPro" id="IPR048723">
    <property type="entry name" value="PRS7-like_OB"/>
</dbReference>
<dbReference type="PANTHER" id="PTHR23073">
    <property type="entry name" value="26S PROTEASOME REGULATORY SUBUNIT"/>
    <property type="match status" value="1"/>
</dbReference>
<dbReference type="Pfam" id="PF00004">
    <property type="entry name" value="AAA"/>
    <property type="match status" value="1"/>
</dbReference>
<dbReference type="Pfam" id="PF17862">
    <property type="entry name" value="AAA_lid_3"/>
    <property type="match status" value="1"/>
</dbReference>
<dbReference type="Pfam" id="PF21236">
    <property type="entry name" value="PRS7_OB"/>
    <property type="match status" value="1"/>
</dbReference>
<dbReference type="SMART" id="SM00382">
    <property type="entry name" value="AAA"/>
    <property type="match status" value="1"/>
</dbReference>
<dbReference type="SUPFAM" id="SSF52540">
    <property type="entry name" value="P-loop containing nucleoside triphosphate hydrolases"/>
    <property type="match status" value="1"/>
</dbReference>
<dbReference type="PROSITE" id="PS00674">
    <property type="entry name" value="AAA"/>
    <property type="match status" value="1"/>
</dbReference>
<reference key="1">
    <citation type="journal article" date="1992" name="Nature">
        <title>New human gene encoding a positive modulator of HIV Tat-mediated transactivation.</title>
        <authorList>
            <person name="Shibuya H."/>
            <person name="Irie K."/>
            <person name="Ninomiya-Tsuji J."/>
            <person name="Goebl M."/>
            <person name="Taniguchi T."/>
            <person name="Matsumoto K."/>
        </authorList>
    </citation>
    <scope>NUCLEOTIDE SEQUENCE [MRNA] (ISOFORM 1)</scope>
    <scope>INTERACTION WITH HIV-1 TAT (MICROBIAL INFECTION)</scope>
</reference>
<reference key="2">
    <citation type="journal article" date="2003" name="Cancer Lett.">
        <title>Neuroblastoma oligo-capping cDNA project: toward the understanding of the genesis and biology of neuroblastoma.</title>
        <authorList>
            <person name="Ohira M."/>
            <person name="Morohashi A."/>
            <person name="Nakamura Y."/>
            <person name="Isogai E."/>
            <person name="Furuya K."/>
            <person name="Hamano S."/>
            <person name="Machida T."/>
            <person name="Aoyama M."/>
            <person name="Fukumura M."/>
            <person name="Miyazaki K."/>
            <person name="Suzuki Y."/>
            <person name="Sugano S."/>
            <person name="Hirato J."/>
            <person name="Nakagawara A."/>
        </authorList>
    </citation>
    <scope>NUCLEOTIDE SEQUENCE [LARGE SCALE MRNA] (ISOFORM 1)</scope>
    <source>
        <tissue>Neuroblastoma</tissue>
    </source>
</reference>
<reference key="3">
    <citation type="journal article" date="2004" name="Nat. Genet.">
        <title>Complete sequencing and characterization of 21,243 full-length human cDNAs.</title>
        <authorList>
            <person name="Ota T."/>
            <person name="Suzuki Y."/>
            <person name="Nishikawa T."/>
            <person name="Otsuki T."/>
            <person name="Sugiyama T."/>
            <person name="Irie R."/>
            <person name="Wakamatsu A."/>
            <person name="Hayashi K."/>
            <person name="Sato H."/>
            <person name="Nagai K."/>
            <person name="Kimura K."/>
            <person name="Makita H."/>
            <person name="Sekine M."/>
            <person name="Obayashi M."/>
            <person name="Nishi T."/>
            <person name="Shibahara T."/>
            <person name="Tanaka T."/>
            <person name="Ishii S."/>
            <person name="Yamamoto J."/>
            <person name="Saito K."/>
            <person name="Kawai Y."/>
            <person name="Isono Y."/>
            <person name="Nakamura Y."/>
            <person name="Nagahari K."/>
            <person name="Murakami K."/>
            <person name="Yasuda T."/>
            <person name="Iwayanagi T."/>
            <person name="Wagatsuma M."/>
            <person name="Shiratori A."/>
            <person name="Sudo H."/>
            <person name="Hosoiri T."/>
            <person name="Kaku Y."/>
            <person name="Kodaira H."/>
            <person name="Kondo H."/>
            <person name="Sugawara M."/>
            <person name="Takahashi M."/>
            <person name="Kanda K."/>
            <person name="Yokoi T."/>
            <person name="Furuya T."/>
            <person name="Kikkawa E."/>
            <person name="Omura Y."/>
            <person name="Abe K."/>
            <person name="Kamihara K."/>
            <person name="Katsuta N."/>
            <person name="Sato K."/>
            <person name="Tanikawa M."/>
            <person name="Yamazaki M."/>
            <person name="Ninomiya K."/>
            <person name="Ishibashi T."/>
            <person name="Yamashita H."/>
            <person name="Murakawa K."/>
            <person name="Fujimori K."/>
            <person name="Tanai H."/>
            <person name="Kimata M."/>
            <person name="Watanabe M."/>
            <person name="Hiraoka S."/>
            <person name="Chiba Y."/>
            <person name="Ishida S."/>
            <person name="Ono Y."/>
            <person name="Takiguchi S."/>
            <person name="Watanabe S."/>
            <person name="Yosida M."/>
            <person name="Hotuta T."/>
            <person name="Kusano J."/>
            <person name="Kanehori K."/>
            <person name="Takahashi-Fujii A."/>
            <person name="Hara H."/>
            <person name="Tanase T.-O."/>
            <person name="Nomura Y."/>
            <person name="Togiya S."/>
            <person name="Komai F."/>
            <person name="Hara R."/>
            <person name="Takeuchi K."/>
            <person name="Arita M."/>
            <person name="Imose N."/>
            <person name="Musashino K."/>
            <person name="Yuuki H."/>
            <person name="Oshima A."/>
            <person name="Sasaki N."/>
            <person name="Aotsuka S."/>
            <person name="Yoshikawa Y."/>
            <person name="Matsunawa H."/>
            <person name="Ichihara T."/>
            <person name="Shiohata N."/>
            <person name="Sano S."/>
            <person name="Moriya S."/>
            <person name="Momiyama H."/>
            <person name="Satoh N."/>
            <person name="Takami S."/>
            <person name="Terashima Y."/>
            <person name="Suzuki O."/>
            <person name="Nakagawa S."/>
            <person name="Senoh A."/>
            <person name="Mizoguchi H."/>
            <person name="Goto Y."/>
            <person name="Shimizu F."/>
            <person name="Wakebe H."/>
            <person name="Hishigaki H."/>
            <person name="Watanabe T."/>
            <person name="Sugiyama A."/>
            <person name="Takemoto M."/>
            <person name="Kawakami B."/>
            <person name="Yamazaki M."/>
            <person name="Watanabe K."/>
            <person name="Kumagai A."/>
            <person name="Itakura S."/>
            <person name="Fukuzumi Y."/>
            <person name="Fujimori Y."/>
            <person name="Komiyama M."/>
            <person name="Tashiro H."/>
            <person name="Tanigami A."/>
            <person name="Fujiwara T."/>
            <person name="Ono T."/>
            <person name="Yamada K."/>
            <person name="Fujii Y."/>
            <person name="Ozaki K."/>
            <person name="Hirao M."/>
            <person name="Ohmori Y."/>
            <person name="Kawabata A."/>
            <person name="Hikiji T."/>
            <person name="Kobatake N."/>
            <person name="Inagaki H."/>
            <person name="Ikema Y."/>
            <person name="Okamoto S."/>
            <person name="Okitani R."/>
            <person name="Kawakami T."/>
            <person name="Noguchi S."/>
            <person name="Itoh T."/>
            <person name="Shigeta K."/>
            <person name="Senba T."/>
            <person name="Matsumura K."/>
            <person name="Nakajima Y."/>
            <person name="Mizuno T."/>
            <person name="Morinaga M."/>
            <person name="Sasaki M."/>
            <person name="Togashi T."/>
            <person name="Oyama M."/>
            <person name="Hata H."/>
            <person name="Watanabe M."/>
            <person name="Komatsu T."/>
            <person name="Mizushima-Sugano J."/>
            <person name="Satoh T."/>
            <person name="Shirai Y."/>
            <person name="Takahashi Y."/>
            <person name="Nakagawa K."/>
            <person name="Okumura K."/>
            <person name="Nagase T."/>
            <person name="Nomura N."/>
            <person name="Kikuchi H."/>
            <person name="Masuho Y."/>
            <person name="Yamashita R."/>
            <person name="Nakai K."/>
            <person name="Yada T."/>
            <person name="Nakamura Y."/>
            <person name="Ohara O."/>
            <person name="Isogai T."/>
            <person name="Sugano S."/>
        </authorList>
    </citation>
    <scope>NUCLEOTIDE SEQUENCE [LARGE SCALE MRNA] (ISOFORM 2)</scope>
</reference>
<reference key="4">
    <citation type="journal article" date="2003" name="Nature">
        <title>The DNA sequence of human chromosome 7.</title>
        <authorList>
            <person name="Hillier L.W."/>
            <person name="Fulton R.S."/>
            <person name="Fulton L.A."/>
            <person name="Graves T.A."/>
            <person name="Pepin K.H."/>
            <person name="Wagner-McPherson C."/>
            <person name="Layman D."/>
            <person name="Maas J."/>
            <person name="Jaeger S."/>
            <person name="Walker R."/>
            <person name="Wylie K."/>
            <person name="Sekhon M."/>
            <person name="Becker M.C."/>
            <person name="O'Laughlin M.D."/>
            <person name="Schaller M.E."/>
            <person name="Fewell G.A."/>
            <person name="Delehaunty K.D."/>
            <person name="Miner T.L."/>
            <person name="Nash W.E."/>
            <person name="Cordes M."/>
            <person name="Du H."/>
            <person name="Sun H."/>
            <person name="Edwards J."/>
            <person name="Bradshaw-Cordum H."/>
            <person name="Ali J."/>
            <person name="Andrews S."/>
            <person name="Isak A."/>
            <person name="Vanbrunt A."/>
            <person name="Nguyen C."/>
            <person name="Du F."/>
            <person name="Lamar B."/>
            <person name="Courtney L."/>
            <person name="Kalicki J."/>
            <person name="Ozersky P."/>
            <person name="Bielicki L."/>
            <person name="Scott K."/>
            <person name="Holmes A."/>
            <person name="Harkins R."/>
            <person name="Harris A."/>
            <person name="Strong C.M."/>
            <person name="Hou S."/>
            <person name="Tomlinson C."/>
            <person name="Dauphin-Kohlberg S."/>
            <person name="Kozlowicz-Reilly A."/>
            <person name="Leonard S."/>
            <person name="Rohlfing T."/>
            <person name="Rock S.M."/>
            <person name="Tin-Wollam A.-M."/>
            <person name="Abbott A."/>
            <person name="Minx P."/>
            <person name="Maupin R."/>
            <person name="Strowmatt C."/>
            <person name="Latreille P."/>
            <person name="Miller N."/>
            <person name="Johnson D."/>
            <person name="Murray J."/>
            <person name="Woessner J.P."/>
            <person name="Wendl M.C."/>
            <person name="Yang S.-P."/>
            <person name="Schultz B.R."/>
            <person name="Wallis J.W."/>
            <person name="Spieth J."/>
            <person name="Bieri T.A."/>
            <person name="Nelson J.O."/>
            <person name="Berkowicz N."/>
            <person name="Wohldmann P.E."/>
            <person name="Cook L.L."/>
            <person name="Hickenbotham M.T."/>
            <person name="Eldred J."/>
            <person name="Williams D."/>
            <person name="Bedell J.A."/>
            <person name="Mardis E.R."/>
            <person name="Clifton S.W."/>
            <person name="Chissoe S.L."/>
            <person name="Marra M.A."/>
            <person name="Raymond C."/>
            <person name="Haugen E."/>
            <person name="Gillett W."/>
            <person name="Zhou Y."/>
            <person name="James R."/>
            <person name="Phelps K."/>
            <person name="Iadanoto S."/>
            <person name="Bubb K."/>
            <person name="Simms E."/>
            <person name="Levy R."/>
            <person name="Clendenning J."/>
            <person name="Kaul R."/>
            <person name="Kent W.J."/>
            <person name="Furey T.S."/>
            <person name="Baertsch R.A."/>
            <person name="Brent M.R."/>
            <person name="Keibler E."/>
            <person name="Flicek P."/>
            <person name="Bork P."/>
            <person name="Suyama M."/>
            <person name="Bailey J.A."/>
            <person name="Portnoy M.E."/>
            <person name="Torrents D."/>
            <person name="Chinwalla A.T."/>
            <person name="Gish W.R."/>
            <person name="Eddy S.R."/>
            <person name="McPherson J.D."/>
            <person name="Olson M.V."/>
            <person name="Eichler E.E."/>
            <person name="Green E.D."/>
            <person name="Waterston R.H."/>
            <person name="Wilson R.K."/>
        </authorList>
    </citation>
    <scope>NUCLEOTIDE SEQUENCE [LARGE SCALE GENOMIC DNA]</scope>
</reference>
<reference key="5">
    <citation type="journal article" date="2003" name="Science">
        <title>Human chromosome 7: DNA sequence and biology.</title>
        <authorList>
            <person name="Scherer S.W."/>
            <person name="Cheung J."/>
            <person name="MacDonald J.R."/>
            <person name="Osborne L.R."/>
            <person name="Nakabayashi K."/>
            <person name="Herbrick J.-A."/>
            <person name="Carson A.R."/>
            <person name="Parker-Katiraee L."/>
            <person name="Skaug J."/>
            <person name="Khaja R."/>
            <person name="Zhang J."/>
            <person name="Hudek A.K."/>
            <person name="Li M."/>
            <person name="Haddad M."/>
            <person name="Duggan G.E."/>
            <person name="Fernandez B.A."/>
            <person name="Kanematsu E."/>
            <person name="Gentles S."/>
            <person name="Christopoulos C.C."/>
            <person name="Choufani S."/>
            <person name="Kwasnicka D."/>
            <person name="Zheng X.H."/>
            <person name="Lai Z."/>
            <person name="Nusskern D.R."/>
            <person name="Zhang Q."/>
            <person name="Gu Z."/>
            <person name="Lu F."/>
            <person name="Zeesman S."/>
            <person name="Nowaczyk M.J."/>
            <person name="Teshima I."/>
            <person name="Chitayat D."/>
            <person name="Shuman C."/>
            <person name="Weksberg R."/>
            <person name="Zackai E.H."/>
            <person name="Grebe T.A."/>
            <person name="Cox S.R."/>
            <person name="Kirkpatrick S.J."/>
            <person name="Rahman N."/>
            <person name="Friedman J.M."/>
            <person name="Heng H.H.Q."/>
            <person name="Pelicci P.G."/>
            <person name="Lo-Coco F."/>
            <person name="Belloni E."/>
            <person name="Shaffer L.G."/>
            <person name="Pober B."/>
            <person name="Morton C.C."/>
            <person name="Gusella J.F."/>
            <person name="Bruns G.A.P."/>
            <person name="Korf B.R."/>
            <person name="Quade B.J."/>
            <person name="Ligon A.H."/>
            <person name="Ferguson H."/>
            <person name="Higgins A.W."/>
            <person name="Leach N.T."/>
            <person name="Herrick S.R."/>
            <person name="Lemyre E."/>
            <person name="Farra C.G."/>
            <person name="Kim H.-G."/>
            <person name="Summers A.M."/>
            <person name="Gripp K.W."/>
            <person name="Roberts W."/>
            <person name="Szatmari P."/>
            <person name="Winsor E.J.T."/>
            <person name="Grzeschik K.-H."/>
            <person name="Teebi A."/>
            <person name="Minassian B.A."/>
            <person name="Kere J."/>
            <person name="Armengol L."/>
            <person name="Pujana M.A."/>
            <person name="Estivill X."/>
            <person name="Wilson M.D."/>
            <person name="Koop B.F."/>
            <person name="Tosi S."/>
            <person name="Moore G.E."/>
            <person name="Boright A.P."/>
            <person name="Zlotorynski E."/>
            <person name="Kerem B."/>
            <person name="Kroisel P.M."/>
            <person name="Petek E."/>
            <person name="Oscier D.G."/>
            <person name="Mould S.J."/>
            <person name="Doehner H."/>
            <person name="Doehner K."/>
            <person name="Rommens J.M."/>
            <person name="Vincent J.B."/>
            <person name="Venter J.C."/>
            <person name="Li P.W."/>
            <person name="Mural R.J."/>
            <person name="Adams M.D."/>
            <person name="Tsui L.-C."/>
        </authorList>
    </citation>
    <scope>NUCLEOTIDE SEQUENCE [LARGE SCALE GENOMIC DNA]</scope>
</reference>
<reference key="6">
    <citation type="submission" date="2005-07" db="EMBL/GenBank/DDBJ databases">
        <authorList>
            <person name="Mural R.J."/>
            <person name="Istrail S."/>
            <person name="Sutton G.G."/>
            <person name="Florea L."/>
            <person name="Halpern A.L."/>
            <person name="Mobarry C.M."/>
            <person name="Lippert R."/>
            <person name="Walenz B."/>
            <person name="Shatkay H."/>
            <person name="Dew I."/>
            <person name="Miller J.R."/>
            <person name="Flanigan M.J."/>
            <person name="Edwards N.J."/>
            <person name="Bolanos R."/>
            <person name="Fasulo D."/>
            <person name="Halldorsson B.V."/>
            <person name="Hannenhalli S."/>
            <person name="Turner R."/>
            <person name="Yooseph S."/>
            <person name="Lu F."/>
            <person name="Nusskern D.R."/>
            <person name="Shue B.C."/>
            <person name="Zheng X.H."/>
            <person name="Zhong F."/>
            <person name="Delcher A.L."/>
            <person name="Huson D.H."/>
            <person name="Kravitz S.A."/>
            <person name="Mouchard L."/>
            <person name="Reinert K."/>
            <person name="Remington K.A."/>
            <person name="Clark A.G."/>
            <person name="Waterman M.S."/>
            <person name="Eichler E.E."/>
            <person name="Adams M.D."/>
            <person name="Hunkapiller M.W."/>
            <person name="Myers E.W."/>
            <person name="Venter J.C."/>
        </authorList>
    </citation>
    <scope>NUCLEOTIDE SEQUENCE [LARGE SCALE GENOMIC DNA]</scope>
</reference>
<reference key="7">
    <citation type="journal article" date="2004" name="Genome Res.">
        <title>The status, quality, and expansion of the NIH full-length cDNA project: the Mammalian Gene Collection (MGC).</title>
        <authorList>
            <consortium name="The MGC Project Team"/>
        </authorList>
    </citation>
    <scope>NUCLEOTIDE SEQUENCE [LARGE SCALE MRNA] (ISOFORM 1)</scope>
    <source>
        <tissue>Brain</tissue>
    </source>
</reference>
<reference key="8">
    <citation type="journal article" date="1993" name="FEBS Lett.">
        <title>Peptide sequencing identifies MSS1, a modulator of HIV Tat-mediated transactivation, as subunit 7 of the 26 S protease.</title>
        <authorList>
            <person name="Dubiel W."/>
            <person name="Ferrell K."/>
            <person name="Rechsteiner M."/>
        </authorList>
    </citation>
    <scope>PROTEIN SEQUENCE OF 2-23; 139-158 AND 320-331</scope>
    <source>
        <tissue>Blood</tissue>
    </source>
</reference>
<reference key="9">
    <citation type="journal article" date="2003" name="Nat. Biotechnol.">
        <title>Exploring proteomes and analyzing protein processing by mass spectrometric identification of sorted N-terminal peptides.</title>
        <authorList>
            <person name="Gevaert K."/>
            <person name="Goethals M."/>
            <person name="Martens L."/>
            <person name="Van Damme J."/>
            <person name="Staes A."/>
            <person name="Thomas G.R."/>
            <person name="Vandekerckhove J."/>
        </authorList>
    </citation>
    <scope>PROTEIN SEQUENCE OF 2-10</scope>
    <source>
        <tissue>Platelet</tissue>
    </source>
</reference>
<reference key="10">
    <citation type="submission" date="2008-12" db="UniProtKB">
        <authorList>
            <person name="Lubec G."/>
            <person name="Vishwanath V."/>
            <person name="Chen W.-Q."/>
            <person name="Sun Y."/>
        </authorList>
    </citation>
    <scope>PROTEIN SEQUENCE OF 85-97; 101-110; 201-210; 269-284 AND 298-312</scope>
    <scope>IDENTIFICATION BY MASS SPECTROMETRY</scope>
    <source>
        <tissue>Brain</tissue>
        <tissue>Cajal-Retzius cell</tissue>
        <tissue>Fetal brain cortex</tissue>
    </source>
</reference>
<reference key="11">
    <citation type="journal article" date="1992" name="Eur. J. Biochem.">
        <title>Demonstration that a human 26S proteolytic complex consists of a proteasome and multiple associated protein components and hydrolyzes ATP and ubiquitin-ligated proteins by closely linked mechanisms.</title>
        <authorList>
            <person name="Kanayama H.O."/>
            <person name="Tamura T."/>
            <person name="Ugai S."/>
            <person name="Kagawa S."/>
            <person name="Tanahashi N."/>
            <person name="Yoshimura T."/>
            <person name="Tanaka K."/>
            <person name="Ichihara A."/>
        </authorList>
    </citation>
    <scope>FUNCTION</scope>
</reference>
<reference key="12">
    <citation type="journal article" date="1997" name="J. Biol. Chem.">
        <title>HEC binds to the seventh regulatory subunit of the 26 S proteasome and modulates the proteolysis of mitotic cyclins.</title>
        <authorList>
            <person name="Chen Y."/>
            <person name="Sharp Z.D."/>
            <person name="Lee W.-H."/>
        </authorList>
    </citation>
    <scope>FUNCTION</scope>
    <scope>INTERACTION WITH NDC80</scope>
    <scope>INDUCTION</scope>
</reference>
<reference key="13">
    <citation type="journal article" date="1999" name="Mol. Cell. Biol.">
        <title>Hec1p, an evolutionarily conserved coiled-coil protein, modulates chromosome segregation through interaction with SMC proteins.</title>
        <authorList>
            <person name="Zheng L."/>
            <person name="Chen Y."/>
            <person name="Lee W.-H."/>
        </authorList>
    </citation>
    <scope>INTERACTION WITH NDC80</scope>
</reference>
<reference key="14">
    <citation type="journal article" date="2003" name="Nature">
        <title>Proteomic characterization of the human centrosome by protein correlation profiling.</title>
        <authorList>
            <person name="Andersen J.S."/>
            <person name="Wilkinson C.J."/>
            <person name="Mayor T."/>
            <person name="Mortensen P."/>
            <person name="Nigg E.A."/>
            <person name="Mann M."/>
        </authorList>
    </citation>
    <scope>IDENTIFICATION BY MASS SPECTROMETRY</scope>
    <source>
        <tissue>Lymphoblast</tissue>
    </source>
</reference>
<reference key="15">
    <citation type="journal article" date="2004" name="Mol. Cell. Biol.">
        <title>Sequestosome 1/p62 is a polyubiquitin chain binding protein involved in ubiquitin proteasome degradation.</title>
        <authorList>
            <person name="Seibenhener M.L."/>
            <person name="Babu J.R."/>
            <person name="Geetha T."/>
            <person name="Wong H.C."/>
            <person name="Krishna N.R."/>
            <person name="Wooten M.W."/>
        </authorList>
    </citation>
    <scope>INTERACTION WITH SQSTM1</scope>
</reference>
<reference key="16">
    <citation type="journal article" date="2005" name="Mol. Cell. Biol.">
        <title>Proteasomal ATPase-associated factor 1 negatively regulates proteasome activity by interacting with proteasomal ATPases.</title>
        <authorList>
            <person name="Park Y."/>
            <person name="Hwang Y.-P."/>
            <person name="Lee J.-S."/>
            <person name="Seo S.-H."/>
            <person name="Yoon S.K."/>
            <person name="Yoon J.-B."/>
        </authorList>
    </citation>
    <scope>INTERACTION WITH PAAF1</scope>
</reference>
<reference key="17">
    <citation type="journal article" date="2007" name="Biochemistry">
        <title>Mass spectrometric characterization of the affinity-purified human 26S proteasome complex.</title>
        <authorList>
            <person name="Wang X."/>
            <person name="Chen C.-F."/>
            <person name="Baker P.R."/>
            <person name="Chen P.-L."/>
            <person name="Kaiser P."/>
            <person name="Huang L."/>
        </authorList>
    </citation>
    <scope>IDENTIFICATION BY MASS SPECTROMETRY [LARGE SCALE ANALYSIS]</scope>
    <source>
        <tissue>Embryonic kidney</tissue>
    </source>
</reference>
<reference key="18">
    <citation type="journal article" date="2009" name="Science">
        <title>Lysine acetylation targets protein complexes and co-regulates major cellular functions.</title>
        <authorList>
            <person name="Choudhary C."/>
            <person name="Kumar C."/>
            <person name="Gnad F."/>
            <person name="Nielsen M.L."/>
            <person name="Rehman M."/>
            <person name="Walther T.C."/>
            <person name="Olsen J.V."/>
            <person name="Mann M."/>
        </authorList>
    </citation>
    <scope>ACETYLATION [LARGE SCALE ANALYSIS] AT LYS-116 AND LYS-422</scope>
    <scope>IDENTIFICATION BY MASS SPECTROMETRY [LARGE SCALE ANALYSIS]</scope>
</reference>
<reference key="19">
    <citation type="journal article" date="2011" name="BMC Syst. Biol.">
        <title>Initial characterization of the human central proteome.</title>
        <authorList>
            <person name="Burkard T.R."/>
            <person name="Planyavsky M."/>
            <person name="Kaupe I."/>
            <person name="Breitwieser F.P."/>
            <person name="Buerckstuemmer T."/>
            <person name="Bennett K.L."/>
            <person name="Superti-Furga G."/>
            <person name="Colinge J."/>
        </authorList>
    </citation>
    <scope>IDENTIFICATION BY MASS SPECTROMETRY [LARGE SCALE ANALYSIS]</scope>
</reference>
<reference key="20">
    <citation type="journal article" date="2011" name="Retrovirology">
        <title>TRIM5alpha associates with proteasomal subunits in cells while in complex with HIV-1 virions.</title>
        <authorList>
            <person name="Lukic Z."/>
            <person name="Hausmann S."/>
            <person name="Sebastian S."/>
            <person name="Rucci J."/>
            <person name="Sastri J."/>
            <person name="Robia S.L."/>
            <person name="Luban J."/>
            <person name="Campbell E.M."/>
        </authorList>
    </citation>
    <scope>INTERACTION WITH TRIM5</scope>
    <scope>SUBCELLULAR LOCATION</scope>
</reference>
<reference key="21">
    <citation type="journal article" date="2012" name="Proc. Natl. Acad. Sci. U.S.A.">
        <title>N-terminal acetylome analyses and functional insights of the N-terminal acetyltransferase NatB.</title>
        <authorList>
            <person name="Van Damme P."/>
            <person name="Lasa M."/>
            <person name="Polevoda B."/>
            <person name="Gazquez C."/>
            <person name="Elosegui-Artola A."/>
            <person name="Kim D.S."/>
            <person name="De Juan-Pardo E."/>
            <person name="Demeyer K."/>
            <person name="Hole K."/>
            <person name="Larrea E."/>
            <person name="Timmerman E."/>
            <person name="Prieto J."/>
            <person name="Arnesen T."/>
            <person name="Sherman F."/>
            <person name="Gevaert K."/>
            <person name="Aldabe R."/>
        </authorList>
    </citation>
    <scope>IDENTIFICATION BY MASS SPECTROMETRY [LARGE SCALE ANALYSIS]</scope>
</reference>
<reference key="22">
    <citation type="journal article" date="2014" name="EMBO J.">
        <title>Autoubiquitination of the 26S proteasome on Rpn13 regulates breakdown of ubiquitin conjugates.</title>
        <authorList>
            <person name="Besche H.C."/>
            <person name="Sha Z."/>
            <person name="Kukushkin N.V."/>
            <person name="Peth A."/>
            <person name="Hock E.M."/>
            <person name="Kim W."/>
            <person name="Gygi S."/>
            <person name="Gutierrez J.A."/>
            <person name="Liao H."/>
            <person name="Dick L."/>
            <person name="Goldberg A.L."/>
        </authorList>
    </citation>
    <scope>UBIQUITINATION</scope>
</reference>
<reference key="23">
    <citation type="journal article" date="2014" name="J. Proteomics">
        <title>An enzyme assisted RP-RPLC approach for in-depth analysis of human liver phosphoproteome.</title>
        <authorList>
            <person name="Bian Y."/>
            <person name="Song C."/>
            <person name="Cheng K."/>
            <person name="Dong M."/>
            <person name="Wang F."/>
            <person name="Huang J."/>
            <person name="Sun D."/>
            <person name="Wang L."/>
            <person name="Ye M."/>
            <person name="Zou H."/>
        </authorList>
    </citation>
    <scope>IDENTIFICATION BY MASS SPECTROMETRY [LARGE SCALE ANALYSIS]</scope>
    <source>
        <tissue>Liver</tissue>
    </source>
</reference>
<reference key="24">
    <citation type="journal article" date="2017" name="Open Biol.">
        <title>Phosphatase UBLCP1 controls proteasome assembly.</title>
        <authorList>
            <person name="Sun S."/>
            <person name="Liu S."/>
            <person name="Zhang Z."/>
            <person name="Zeng W."/>
            <person name="Sun C."/>
            <person name="Tao T."/>
            <person name="Lin X."/>
            <person name="Feng X.H."/>
        </authorList>
    </citation>
    <scope>FUNCTION</scope>
    <scope>PHOSPHORYLATION</scope>
    <scope>DEPHOSPHORYLATION BY UBLCP1</scope>
</reference>
<reference key="25">
    <citation type="journal article" date="2016" name="Nat. Struct. Mol. Biol.">
        <title>An atomic structure of the human 26S proteasome.</title>
        <authorList>
            <person name="Huang X."/>
            <person name="Luan B."/>
            <person name="Wu J."/>
            <person name="Shi Y."/>
        </authorList>
    </citation>
    <scope>STRUCTURE BY ELECTRON MICROSCOPY (3.50 ANGSTROMS) OF 1-440</scope>
    <scope>SUBUNIT</scope>
</reference>
<reference key="26">
    <citation type="journal article" date="2016" name="Proc. Natl. Acad. Sci. U.S.A.">
        <title>Structure of the human 26S proteasome at a resolution of 3.9 Aa.</title>
        <authorList>
            <person name="Schweitzer A."/>
            <person name="Aufderheide A."/>
            <person name="Rudack T."/>
            <person name="Beck F."/>
            <person name="Pfeifer G."/>
            <person name="Plitzko J.M."/>
            <person name="Sakata E."/>
            <person name="Schulten K."/>
            <person name="Foerster F."/>
            <person name="Baumeister W."/>
        </authorList>
    </citation>
    <scope>STRUCTURE BY ELECTRON MICROSCOPY (4.02 ANGSTROMS) OF 1-440</scope>
    <scope>SUBUNIT</scope>
</reference>
<evidence type="ECO:0000255" key="1"/>
<evidence type="ECO:0000256" key="2">
    <source>
        <dbReference type="SAM" id="MobiDB-lite"/>
    </source>
</evidence>
<evidence type="ECO:0000269" key="3">
    <source>
    </source>
</evidence>
<evidence type="ECO:0000269" key="4">
    <source>
    </source>
</evidence>
<evidence type="ECO:0000269" key="5">
    <source>
    </source>
</evidence>
<evidence type="ECO:0000269" key="6">
    <source>
    </source>
</evidence>
<evidence type="ECO:0000269" key="7">
    <source>
    </source>
</evidence>
<evidence type="ECO:0000269" key="8">
    <source>
    </source>
</evidence>
<evidence type="ECO:0000269" key="9">
    <source>
    </source>
</evidence>
<evidence type="ECO:0000269" key="10">
    <source>
    </source>
</evidence>
<evidence type="ECO:0000269" key="11">
    <source>
    </source>
</evidence>
<evidence type="ECO:0000269" key="12">
    <source>
    </source>
</evidence>
<evidence type="ECO:0000269" key="13">
    <source>
    </source>
</evidence>
<evidence type="ECO:0000269" key="14">
    <source>
    </source>
</evidence>
<evidence type="ECO:0000269" key="15">
    <source>
    </source>
</evidence>
<evidence type="ECO:0000303" key="16">
    <source>
    </source>
</evidence>
<evidence type="ECO:0000303" key="17">
    <source>
    </source>
</evidence>
<evidence type="ECO:0000305" key="18"/>
<evidence type="ECO:0007744" key="19">
    <source>
    </source>
</evidence>
<evidence type="ECO:0007829" key="20">
    <source>
        <dbReference type="PDB" id="9E8J"/>
    </source>
</evidence>